<reference evidence="2" key="1">
    <citation type="journal article" date="2008" name="Rapid Commun. Mass Spectrom.">
        <title>The fallaxidin peptides from the skin secretion of the eastern dwarf tree frog Litoria fallax. Sequence determination by positive and negative ion electrospray mass spectrometry: antimicrobial activity and cDNA cloning of the fallaxidins.</title>
        <authorList>
            <person name="Jackway R.J."/>
            <person name="Bowie J.H."/>
            <person name="Bilusich D."/>
            <person name="Musgrave I.F."/>
            <person name="Surinya-Johnson K.H."/>
            <person name="Tyler M.J."/>
            <person name="Eichinger P.C.H."/>
        </authorList>
    </citation>
    <scope>PROTEIN SEQUENCE</scope>
    <scope>FUNCTION</scope>
    <scope>SUBCELLULAR LOCATION</scope>
    <scope>TISSUE SPECIFICITY</scope>
    <scope>MASS SPECTROMETRY</scope>
    <scope>AMIDATION AT LEU-14</scope>
    <source>
        <tissue evidence="1">Skin secretion</tissue>
    </source>
</reference>
<name>FA311_LITFA</name>
<accession>P86165</accession>
<feature type="peptide" id="PRO_0000361698" description="Fallaxidin-3.1.1">
    <location>
        <begin position="1"/>
        <end position="14"/>
    </location>
</feature>
<feature type="modified residue" description="Leucine amide" evidence="1">
    <location>
        <position position="14"/>
    </location>
</feature>
<sequence>LDLAKHVIGIASKL</sequence>
<organism>
    <name type="scientific">Litoria fallax</name>
    <name type="common">Eastern dwarf tree frog</name>
    <name type="synonym">Hylomantis fallax</name>
    <dbReference type="NCBI Taxonomy" id="115422"/>
    <lineage>
        <taxon>Eukaryota</taxon>
        <taxon>Metazoa</taxon>
        <taxon>Chordata</taxon>
        <taxon>Craniata</taxon>
        <taxon>Vertebrata</taxon>
        <taxon>Euteleostomi</taxon>
        <taxon>Amphibia</taxon>
        <taxon>Batrachia</taxon>
        <taxon>Anura</taxon>
        <taxon>Neobatrachia</taxon>
        <taxon>Hyloidea</taxon>
        <taxon>Hylidae</taxon>
        <taxon>Pelodryadinae</taxon>
        <taxon>Litoria</taxon>
    </lineage>
</organism>
<keyword id="KW-0027">Amidation</keyword>
<keyword id="KW-0878">Amphibian defense peptide</keyword>
<keyword id="KW-0903">Direct protein sequencing</keyword>
<keyword id="KW-0964">Secreted</keyword>
<evidence type="ECO:0000269" key="1">
    <source>
    </source>
</evidence>
<evidence type="ECO:0000305" key="2"/>
<protein>
    <recommendedName>
        <fullName>Fallaxidin-3.1.1</fullName>
    </recommendedName>
</protein>
<proteinExistence type="evidence at protein level"/>
<dbReference type="GO" id="GO:0005576">
    <property type="term" value="C:extracellular region"/>
    <property type="evidence" value="ECO:0000314"/>
    <property type="project" value="UniProtKB"/>
</dbReference>
<dbReference type="GO" id="GO:0006952">
    <property type="term" value="P:defense response"/>
    <property type="evidence" value="ECO:0007669"/>
    <property type="project" value="UniProtKB-KW"/>
</dbReference>
<comment type="function">
    <text evidence="1">Lacks antibacterial activity against Gram-positive or Gram-negative bacteria.</text>
</comment>
<comment type="subcellular location">
    <subcellularLocation>
        <location evidence="1">Secreted</location>
    </subcellularLocation>
</comment>
<comment type="tissue specificity">
    <text evidence="1">Expressed by the skin glands.</text>
</comment>
<comment type="mass spectrometry"/>
<comment type="similarity">
    <text evidence="2">Belongs to the frog skin active peptide (FSAP) family. Brevinin subfamily.</text>
</comment>